<accession>B8FM87</accession>
<protein>
    <recommendedName>
        <fullName evidence="1">Co-chaperonin GroES</fullName>
    </recommendedName>
    <alternativeName>
        <fullName evidence="1">10 kDa chaperonin</fullName>
    </alternativeName>
    <alternativeName>
        <fullName evidence="1">Chaperonin-10</fullName>
        <shortName evidence="1">Cpn10</shortName>
    </alternativeName>
</protein>
<name>CH10_DESAL</name>
<sequence length="95" mass="10349">MKLQPLADRILVKRLAEETKTKGGIIIPDTAKEKPAEGEIVAVGPGRNAEDGTKIALEVKVGDRVLFGKYSGTEVKIEGEEYLIMREDDVLGIVQ</sequence>
<comment type="function">
    <text evidence="1">Together with the chaperonin GroEL, plays an essential role in assisting protein folding. The GroEL-GroES system forms a nano-cage that allows encapsulation of the non-native substrate proteins and provides a physical environment optimized to promote and accelerate protein folding. GroES binds to the apical surface of the GroEL ring, thereby capping the opening of the GroEL channel.</text>
</comment>
<comment type="subunit">
    <text evidence="1">Heptamer of 7 subunits arranged in a ring. Interacts with the chaperonin GroEL.</text>
</comment>
<comment type="subcellular location">
    <subcellularLocation>
        <location evidence="1">Cytoplasm</location>
    </subcellularLocation>
</comment>
<comment type="similarity">
    <text evidence="1">Belongs to the GroES chaperonin family.</text>
</comment>
<dbReference type="EMBL" id="CP001322">
    <property type="protein sequence ID" value="ACL05925.1"/>
    <property type="molecule type" value="Genomic_DNA"/>
</dbReference>
<dbReference type="RefSeq" id="WP_015948972.1">
    <property type="nucleotide sequence ID" value="NC_011768.1"/>
</dbReference>
<dbReference type="SMR" id="B8FM87"/>
<dbReference type="KEGG" id="dal:Dalk_4243"/>
<dbReference type="eggNOG" id="COG0234">
    <property type="taxonomic scope" value="Bacteria"/>
</dbReference>
<dbReference type="HOGENOM" id="CLU_132825_2_0_7"/>
<dbReference type="Proteomes" id="UP000000739">
    <property type="component" value="Chromosome"/>
</dbReference>
<dbReference type="GO" id="GO:0005737">
    <property type="term" value="C:cytoplasm"/>
    <property type="evidence" value="ECO:0007669"/>
    <property type="project" value="UniProtKB-SubCell"/>
</dbReference>
<dbReference type="GO" id="GO:0005524">
    <property type="term" value="F:ATP binding"/>
    <property type="evidence" value="ECO:0007669"/>
    <property type="project" value="InterPro"/>
</dbReference>
<dbReference type="GO" id="GO:0046872">
    <property type="term" value="F:metal ion binding"/>
    <property type="evidence" value="ECO:0007669"/>
    <property type="project" value="TreeGrafter"/>
</dbReference>
<dbReference type="GO" id="GO:0044183">
    <property type="term" value="F:protein folding chaperone"/>
    <property type="evidence" value="ECO:0007669"/>
    <property type="project" value="InterPro"/>
</dbReference>
<dbReference type="GO" id="GO:0051087">
    <property type="term" value="F:protein-folding chaperone binding"/>
    <property type="evidence" value="ECO:0007669"/>
    <property type="project" value="TreeGrafter"/>
</dbReference>
<dbReference type="GO" id="GO:0051082">
    <property type="term" value="F:unfolded protein binding"/>
    <property type="evidence" value="ECO:0007669"/>
    <property type="project" value="TreeGrafter"/>
</dbReference>
<dbReference type="GO" id="GO:0051085">
    <property type="term" value="P:chaperone cofactor-dependent protein refolding"/>
    <property type="evidence" value="ECO:0007669"/>
    <property type="project" value="TreeGrafter"/>
</dbReference>
<dbReference type="CDD" id="cd00320">
    <property type="entry name" value="cpn10"/>
    <property type="match status" value="1"/>
</dbReference>
<dbReference type="FunFam" id="2.30.33.40:FF:000001">
    <property type="entry name" value="10 kDa chaperonin"/>
    <property type="match status" value="1"/>
</dbReference>
<dbReference type="Gene3D" id="2.30.33.40">
    <property type="entry name" value="GroES chaperonin"/>
    <property type="match status" value="1"/>
</dbReference>
<dbReference type="HAMAP" id="MF_00580">
    <property type="entry name" value="CH10"/>
    <property type="match status" value="1"/>
</dbReference>
<dbReference type="InterPro" id="IPR020818">
    <property type="entry name" value="Chaperonin_GroES"/>
</dbReference>
<dbReference type="InterPro" id="IPR037124">
    <property type="entry name" value="Chaperonin_GroES_sf"/>
</dbReference>
<dbReference type="InterPro" id="IPR018369">
    <property type="entry name" value="Chaprnonin_Cpn10_CS"/>
</dbReference>
<dbReference type="InterPro" id="IPR011032">
    <property type="entry name" value="GroES-like_sf"/>
</dbReference>
<dbReference type="NCBIfam" id="NF001527">
    <property type="entry name" value="PRK00364.1-2"/>
    <property type="match status" value="1"/>
</dbReference>
<dbReference type="NCBIfam" id="NF001529">
    <property type="entry name" value="PRK00364.1-5"/>
    <property type="match status" value="1"/>
</dbReference>
<dbReference type="NCBIfam" id="NF001531">
    <property type="entry name" value="PRK00364.2-2"/>
    <property type="match status" value="1"/>
</dbReference>
<dbReference type="NCBIfam" id="NF001533">
    <property type="entry name" value="PRK00364.2-4"/>
    <property type="match status" value="1"/>
</dbReference>
<dbReference type="NCBIfam" id="NF001534">
    <property type="entry name" value="PRK00364.2-5"/>
    <property type="match status" value="1"/>
</dbReference>
<dbReference type="PANTHER" id="PTHR10772">
    <property type="entry name" value="10 KDA HEAT SHOCK PROTEIN"/>
    <property type="match status" value="1"/>
</dbReference>
<dbReference type="PANTHER" id="PTHR10772:SF58">
    <property type="entry name" value="CO-CHAPERONIN GROES"/>
    <property type="match status" value="1"/>
</dbReference>
<dbReference type="Pfam" id="PF00166">
    <property type="entry name" value="Cpn10"/>
    <property type="match status" value="1"/>
</dbReference>
<dbReference type="PRINTS" id="PR00297">
    <property type="entry name" value="CHAPERONIN10"/>
</dbReference>
<dbReference type="SMART" id="SM00883">
    <property type="entry name" value="Cpn10"/>
    <property type="match status" value="1"/>
</dbReference>
<dbReference type="SUPFAM" id="SSF50129">
    <property type="entry name" value="GroES-like"/>
    <property type="match status" value="1"/>
</dbReference>
<dbReference type="PROSITE" id="PS00681">
    <property type="entry name" value="CHAPERONINS_CPN10"/>
    <property type="match status" value="1"/>
</dbReference>
<keyword id="KW-0143">Chaperone</keyword>
<keyword id="KW-0963">Cytoplasm</keyword>
<keyword id="KW-1185">Reference proteome</keyword>
<organism>
    <name type="scientific">Desulfatibacillum aliphaticivorans</name>
    <dbReference type="NCBI Taxonomy" id="218208"/>
    <lineage>
        <taxon>Bacteria</taxon>
        <taxon>Pseudomonadati</taxon>
        <taxon>Thermodesulfobacteriota</taxon>
        <taxon>Desulfobacteria</taxon>
        <taxon>Desulfobacterales</taxon>
        <taxon>Desulfatibacillaceae</taxon>
        <taxon>Desulfatibacillum</taxon>
    </lineage>
</organism>
<proteinExistence type="inferred from homology"/>
<reference key="1">
    <citation type="journal article" date="2012" name="Environ. Microbiol.">
        <title>The genome sequence of Desulfatibacillum alkenivorans AK-01: a blueprint for anaerobic alkane oxidation.</title>
        <authorList>
            <person name="Callaghan A.V."/>
            <person name="Morris B.E."/>
            <person name="Pereira I.A."/>
            <person name="McInerney M.J."/>
            <person name="Austin R.N."/>
            <person name="Groves J.T."/>
            <person name="Kukor J.J."/>
            <person name="Suflita J.M."/>
            <person name="Young L.Y."/>
            <person name="Zylstra G.J."/>
            <person name="Wawrik B."/>
        </authorList>
    </citation>
    <scope>NUCLEOTIDE SEQUENCE [LARGE SCALE GENOMIC DNA]</scope>
    <source>
        <strain>AK-01</strain>
    </source>
</reference>
<feature type="chain" id="PRO_1000129648" description="Co-chaperonin GroES">
    <location>
        <begin position="1"/>
        <end position="95"/>
    </location>
</feature>
<evidence type="ECO:0000255" key="1">
    <source>
        <dbReference type="HAMAP-Rule" id="MF_00580"/>
    </source>
</evidence>
<gene>
    <name evidence="1" type="primary">groES</name>
    <name evidence="1" type="synonym">groS</name>
    <name type="ordered locus">Dalk_4243</name>
</gene>